<name>GLNB_KLEOX</name>
<organism>
    <name type="scientific">Klebsiella oxytoca</name>
    <dbReference type="NCBI Taxonomy" id="571"/>
    <lineage>
        <taxon>Bacteria</taxon>
        <taxon>Pseudomonadati</taxon>
        <taxon>Pseudomonadota</taxon>
        <taxon>Gammaproteobacteria</taxon>
        <taxon>Enterobacterales</taxon>
        <taxon>Enterobacteriaceae</taxon>
        <taxon>Klebsiella/Raoultella group</taxon>
        <taxon>Klebsiella</taxon>
    </lineage>
</organism>
<accession>P11671</accession>
<gene>
    <name type="primary">glnB</name>
</gene>
<sequence length="112" mass="12429">MKKIDAIIKPFKLDDVREALAEVGITGMTVTEVKGFGRQKGHTELYRGAEYMVDFLPKVKIEIVVTDDIVDTCVDTIIRTAQTGKIGDGKIFVFDVARVIRIRTGEEDDAAI</sequence>
<comment type="function">
    <text>In nitrogen-limiting conditions, when the ratio of Gln to 2-ketoglutarate decreases, P-II is uridylylated to P-II-UMP. P-II-UMP allows the deadenylation of glutamine synthetase (GS), thus activating the enzyme. Conversely, in nitrogen excess P-II is deuridylated and promotes the adenylation of GS. P-II indirectly controls the transcription of the GS gene (glnA). P-II prevents NR-II-catalyzed conversion of NR-I to NR-I-phosphate, the transcriptional activator of glnA. When P-II is uridylylated to P-II-UMP, these events are reversed.</text>
</comment>
<comment type="subunit">
    <text evidence="1">Homotrimer.</text>
</comment>
<comment type="similarity">
    <text evidence="2">Belongs to the P(II) protein family.</text>
</comment>
<proteinExistence type="evidence at protein level"/>
<reference key="1">
    <citation type="journal article" date="1988" name="Mol. Gen. Genet.">
        <title>Identification of the Klebsiella pneumoniae glnB gene: nucleotide sequence of wild-type and mutant alleles.</title>
        <authorList>
            <person name="Holtel A."/>
            <person name="Merrick M."/>
        </authorList>
    </citation>
    <scope>NUCLEOTIDE SEQUENCE [GENOMIC DNA]</scope>
    <scope>MUTAGENESIS OF GLU-50</scope>
    <source>
        <strain>M5a1</strain>
    </source>
</reference>
<dbReference type="EMBL" id="X14012">
    <property type="protein sequence ID" value="CAA32177.1"/>
    <property type="molecule type" value="Genomic_DNA"/>
</dbReference>
<dbReference type="PIR" id="S04377">
    <property type="entry name" value="S04377"/>
</dbReference>
<dbReference type="RefSeq" id="WP_002914032.1">
    <property type="nucleotide sequence ID" value="NZ_WVTN01000003.1"/>
</dbReference>
<dbReference type="SMR" id="P11671"/>
<dbReference type="STRING" id="571.AB185_14525"/>
<dbReference type="GeneID" id="98389725"/>
<dbReference type="eggNOG" id="COG0347">
    <property type="taxonomic scope" value="Bacteria"/>
</dbReference>
<dbReference type="OrthoDB" id="9802729at2"/>
<dbReference type="GO" id="GO:0005829">
    <property type="term" value="C:cytosol"/>
    <property type="evidence" value="ECO:0007669"/>
    <property type="project" value="TreeGrafter"/>
</dbReference>
<dbReference type="GO" id="GO:0005524">
    <property type="term" value="F:ATP binding"/>
    <property type="evidence" value="ECO:0007669"/>
    <property type="project" value="TreeGrafter"/>
</dbReference>
<dbReference type="GO" id="GO:0030234">
    <property type="term" value="F:enzyme regulator activity"/>
    <property type="evidence" value="ECO:0007669"/>
    <property type="project" value="InterPro"/>
</dbReference>
<dbReference type="GO" id="GO:0009399">
    <property type="term" value="P:nitrogen fixation"/>
    <property type="evidence" value="ECO:0007669"/>
    <property type="project" value="UniProtKB-KW"/>
</dbReference>
<dbReference type="GO" id="GO:0006808">
    <property type="term" value="P:regulation of nitrogen utilization"/>
    <property type="evidence" value="ECO:0007669"/>
    <property type="project" value="InterPro"/>
</dbReference>
<dbReference type="FunFam" id="3.30.70.120:FF:000001">
    <property type="entry name" value="Nitrogen regulatory protein P-II"/>
    <property type="match status" value="1"/>
</dbReference>
<dbReference type="Gene3D" id="3.30.70.120">
    <property type="match status" value="1"/>
</dbReference>
<dbReference type="InterPro" id="IPR002187">
    <property type="entry name" value="N-reg_PII"/>
</dbReference>
<dbReference type="InterPro" id="IPR011322">
    <property type="entry name" value="N-reg_PII-like_a/b"/>
</dbReference>
<dbReference type="InterPro" id="IPR015867">
    <property type="entry name" value="N-reg_PII/ATP_PRibTrfase_C"/>
</dbReference>
<dbReference type="InterPro" id="IPR017918">
    <property type="entry name" value="N-reg_PII_CS"/>
</dbReference>
<dbReference type="InterPro" id="IPR002332">
    <property type="entry name" value="N-reg_PII_urydylation_site"/>
</dbReference>
<dbReference type="NCBIfam" id="NF008111">
    <property type="entry name" value="PRK10858.1"/>
    <property type="match status" value="1"/>
</dbReference>
<dbReference type="PANTHER" id="PTHR30115">
    <property type="entry name" value="NITROGEN REGULATORY PROTEIN P-II"/>
    <property type="match status" value="1"/>
</dbReference>
<dbReference type="PANTHER" id="PTHR30115:SF11">
    <property type="entry name" value="NITROGEN REGULATORY PROTEIN P-II HOMOLOG"/>
    <property type="match status" value="1"/>
</dbReference>
<dbReference type="Pfam" id="PF00543">
    <property type="entry name" value="P-II"/>
    <property type="match status" value="1"/>
</dbReference>
<dbReference type="PIRSF" id="PIRSF039144">
    <property type="entry name" value="GlnB"/>
    <property type="match status" value="1"/>
</dbReference>
<dbReference type="PRINTS" id="PR00340">
    <property type="entry name" value="PIIGLNB"/>
</dbReference>
<dbReference type="SMART" id="SM00938">
    <property type="entry name" value="P-II"/>
    <property type="match status" value="1"/>
</dbReference>
<dbReference type="SUPFAM" id="SSF54913">
    <property type="entry name" value="GlnB-like"/>
    <property type="match status" value="1"/>
</dbReference>
<dbReference type="PROSITE" id="PS00638">
    <property type="entry name" value="PII_GLNB_CTER"/>
    <property type="match status" value="1"/>
</dbReference>
<dbReference type="PROSITE" id="PS51343">
    <property type="entry name" value="PII_GLNB_DOM"/>
    <property type="match status" value="1"/>
</dbReference>
<dbReference type="PROSITE" id="PS00496">
    <property type="entry name" value="PII_GLNB_UMP"/>
    <property type="match status" value="1"/>
</dbReference>
<protein>
    <recommendedName>
        <fullName>Nitrogen regulatory protein P-II</fullName>
    </recommendedName>
</protein>
<evidence type="ECO:0000250" key="1"/>
<evidence type="ECO:0000255" key="2">
    <source>
        <dbReference type="PROSITE-ProRule" id="PRU00675"/>
    </source>
</evidence>
<evidence type="ECO:0000269" key="3">
    <source>
    </source>
</evidence>
<feature type="chain" id="PRO_0000139778" description="Nitrogen regulatory protein P-II">
    <location>
        <begin position="1"/>
        <end position="112"/>
    </location>
</feature>
<feature type="modified residue" description="O-UMP-tyrosine" evidence="2">
    <location>
        <position position="51"/>
    </location>
</feature>
<feature type="mutagenesis site" description="Glutamine auxotrophy." evidence="3">
    <original>E</original>
    <variation>Y</variation>
    <location>
        <position position="50"/>
    </location>
</feature>
<keyword id="KW-0535">Nitrogen fixation</keyword>
<keyword id="KW-0547">Nucleotide-binding</keyword>
<keyword id="KW-0597">Phosphoprotein</keyword>
<keyword id="KW-0804">Transcription</keyword>
<keyword id="KW-0805">Transcription regulation</keyword>